<keyword id="KW-0067">ATP-binding</keyword>
<keyword id="KW-0963">Cytoplasm</keyword>
<keyword id="KW-0378">Hydrolase</keyword>
<keyword id="KW-0547">Nucleotide-binding</keyword>
<keyword id="KW-0645">Protease</keyword>
<keyword id="KW-1185">Reference proteome</keyword>
<keyword id="KW-0720">Serine protease</keyword>
<keyword id="KW-0346">Stress response</keyword>
<sequence length="823" mass="91223">MEEIEDKEPRQENEELKIPDVLPLLPVRDVVVYPYMILPLFVGREISINAVDQALSRDRLIFLATQKEMGDEEPTPEGMYTVGTVAMIMRMLKLPDGRVKVLVQGLAKGLITEFVESKPAYTVRIERIVEPSVPEESLETEALMRAVKEQLTQIVSLGKAVSPEVLVIVENMQEPGSLADLIASNIGLKVDDAQALLEIIDPVQRLQKVNEHLNKEHELLDMQVKIQSAAKEEMGKSQREYFLREQLRAIQQELGETDPRSEELNELRKAIEQAKMPPVVEKEAFKQLGRLEQMHPDAAEAGMLRTFLDWMVELPWGKATKDVLDIKRARQILDEDHFYLEKIKERILEFLAVRKLRKKMKGPILCFVGPPGVGKTSLGKSIARAMGRKFVRISLGGVRDEAEIRGHRRTYVGALPGRIIQGLKQAGSNNPVFMLDELDKLGADFRGDPSSALLEVLDPEQNHMFSDHYINLPFNLSNVMFIATANQIDTVPGPLRDRMEVIQLSGYTEEEKLEIAKRYLIPRQMKENGISEKEIVISDEAVRTIIAKYTREAGLRNLEREIGSVCRKVARKVAEGDGRRFRITPATVAKYLGPARFIREGEMEKNEVGIVTGLAWTPVGGEVLFVEATIMKGKGGLTLTGHLGDVMKESVQAALSYIRSKAKEFHLAEDFLSGYDIHVHVPAGAIPKDGPSAGVTMATALVSALTRVPVRKDVAMTGEITLRGKVLPIGGLKEKMLAAIRAGIKTIVIPEQNEKDLEEIPKHILKKVTVVSAKVIDDVLAVALETFPPPPPASEGKPAATVKAPPRRGIAAPRKGAMAGAKS</sequence>
<accession>Q39QP7</accession>
<evidence type="ECO:0000255" key="1">
    <source>
        <dbReference type="HAMAP-Rule" id="MF_01973"/>
    </source>
</evidence>
<evidence type="ECO:0000255" key="2">
    <source>
        <dbReference type="PROSITE-ProRule" id="PRU01122"/>
    </source>
</evidence>
<evidence type="ECO:0000255" key="3">
    <source>
        <dbReference type="PROSITE-ProRule" id="PRU01123"/>
    </source>
</evidence>
<evidence type="ECO:0000256" key="4">
    <source>
        <dbReference type="SAM" id="MobiDB-lite"/>
    </source>
</evidence>
<comment type="function">
    <text evidence="1">ATP-dependent serine protease that mediates the selective degradation of mutant and abnormal proteins as well as certain short-lived regulatory proteins. Required for cellular homeostasis and for survival from DNA damage and developmental changes induced by stress. Degrades polypeptides processively to yield small peptide fragments that are 5 to 10 amino acids long. Binds to DNA in a double-stranded, site-specific manner.</text>
</comment>
<comment type="catalytic activity">
    <reaction evidence="1">
        <text>Hydrolysis of proteins in presence of ATP.</text>
        <dbReference type="EC" id="3.4.21.53"/>
    </reaction>
</comment>
<comment type="subunit">
    <text evidence="1">Homohexamer. Organized in a ring with a central cavity.</text>
</comment>
<comment type="subcellular location">
    <subcellularLocation>
        <location evidence="1">Cytoplasm</location>
    </subcellularLocation>
</comment>
<comment type="induction">
    <text evidence="1">By heat shock.</text>
</comment>
<comment type="similarity">
    <text evidence="1">Belongs to the peptidase S16 family.</text>
</comment>
<gene>
    <name evidence="1" type="primary">lon</name>
    <name type="ordered locus">Gmet_3214</name>
</gene>
<reference key="1">
    <citation type="journal article" date="2009" name="BMC Microbiol.">
        <title>The genome sequence of Geobacter metallireducens: features of metabolism, physiology and regulation common and dissimilar to Geobacter sulfurreducens.</title>
        <authorList>
            <person name="Aklujkar M."/>
            <person name="Krushkal J."/>
            <person name="DiBartolo G."/>
            <person name="Lapidus A."/>
            <person name="Land M.L."/>
            <person name="Lovley D.R."/>
        </authorList>
    </citation>
    <scope>NUCLEOTIDE SEQUENCE [LARGE SCALE GENOMIC DNA]</scope>
    <source>
        <strain>ATCC 53774 / DSM 7210 / GS-15</strain>
    </source>
</reference>
<name>LON_GEOMG</name>
<feature type="chain" id="PRO_0000396571" description="Lon protease">
    <location>
        <begin position="1"/>
        <end position="823"/>
    </location>
</feature>
<feature type="domain" description="Lon N-terminal" evidence="3">
    <location>
        <begin position="22"/>
        <end position="217"/>
    </location>
</feature>
<feature type="domain" description="Lon proteolytic" evidence="2">
    <location>
        <begin position="605"/>
        <end position="786"/>
    </location>
</feature>
<feature type="region of interest" description="Disordered" evidence="4">
    <location>
        <begin position="788"/>
        <end position="823"/>
    </location>
</feature>
<feature type="active site" evidence="1">
    <location>
        <position position="692"/>
    </location>
</feature>
<feature type="active site" evidence="1">
    <location>
        <position position="735"/>
    </location>
</feature>
<feature type="binding site" evidence="1">
    <location>
        <begin position="369"/>
        <end position="376"/>
    </location>
    <ligand>
        <name>ATP</name>
        <dbReference type="ChEBI" id="CHEBI:30616"/>
    </ligand>
</feature>
<dbReference type="EC" id="3.4.21.53" evidence="1"/>
<dbReference type="EMBL" id="CP000148">
    <property type="protein sequence ID" value="ABB33427.1"/>
    <property type="molecule type" value="Genomic_DNA"/>
</dbReference>
<dbReference type="RefSeq" id="WP_004512652.1">
    <property type="nucleotide sequence ID" value="NC_007517.1"/>
</dbReference>
<dbReference type="SMR" id="Q39QP7"/>
<dbReference type="STRING" id="269799.Gmet_3214"/>
<dbReference type="MEROPS" id="S16.001"/>
<dbReference type="KEGG" id="gme:Gmet_3214"/>
<dbReference type="eggNOG" id="COG0466">
    <property type="taxonomic scope" value="Bacteria"/>
</dbReference>
<dbReference type="HOGENOM" id="CLU_004109_4_3_7"/>
<dbReference type="Proteomes" id="UP000007073">
    <property type="component" value="Chromosome"/>
</dbReference>
<dbReference type="GO" id="GO:0005737">
    <property type="term" value="C:cytoplasm"/>
    <property type="evidence" value="ECO:0007669"/>
    <property type="project" value="UniProtKB-SubCell"/>
</dbReference>
<dbReference type="GO" id="GO:0005524">
    <property type="term" value="F:ATP binding"/>
    <property type="evidence" value="ECO:0007669"/>
    <property type="project" value="UniProtKB-UniRule"/>
</dbReference>
<dbReference type="GO" id="GO:0016887">
    <property type="term" value="F:ATP hydrolysis activity"/>
    <property type="evidence" value="ECO:0007669"/>
    <property type="project" value="UniProtKB-UniRule"/>
</dbReference>
<dbReference type="GO" id="GO:0004176">
    <property type="term" value="F:ATP-dependent peptidase activity"/>
    <property type="evidence" value="ECO:0007669"/>
    <property type="project" value="UniProtKB-UniRule"/>
</dbReference>
<dbReference type="GO" id="GO:0043565">
    <property type="term" value="F:sequence-specific DNA binding"/>
    <property type="evidence" value="ECO:0007669"/>
    <property type="project" value="UniProtKB-UniRule"/>
</dbReference>
<dbReference type="GO" id="GO:0004252">
    <property type="term" value="F:serine-type endopeptidase activity"/>
    <property type="evidence" value="ECO:0007669"/>
    <property type="project" value="UniProtKB-UniRule"/>
</dbReference>
<dbReference type="GO" id="GO:0034605">
    <property type="term" value="P:cellular response to heat"/>
    <property type="evidence" value="ECO:0007669"/>
    <property type="project" value="UniProtKB-UniRule"/>
</dbReference>
<dbReference type="GO" id="GO:0006515">
    <property type="term" value="P:protein quality control for misfolded or incompletely synthesized proteins"/>
    <property type="evidence" value="ECO:0007669"/>
    <property type="project" value="UniProtKB-UniRule"/>
</dbReference>
<dbReference type="CDD" id="cd19500">
    <property type="entry name" value="RecA-like_Lon"/>
    <property type="match status" value="1"/>
</dbReference>
<dbReference type="FunFam" id="3.40.50.300:FF:000382">
    <property type="entry name" value="Lon protease homolog 2, peroxisomal"/>
    <property type="match status" value="1"/>
</dbReference>
<dbReference type="Gene3D" id="1.10.8.60">
    <property type="match status" value="1"/>
</dbReference>
<dbReference type="Gene3D" id="1.20.5.5270">
    <property type="match status" value="1"/>
</dbReference>
<dbReference type="Gene3D" id="1.20.58.1480">
    <property type="match status" value="1"/>
</dbReference>
<dbReference type="Gene3D" id="3.30.230.10">
    <property type="match status" value="1"/>
</dbReference>
<dbReference type="Gene3D" id="2.30.130.40">
    <property type="entry name" value="LON domain-like"/>
    <property type="match status" value="1"/>
</dbReference>
<dbReference type="Gene3D" id="3.40.50.300">
    <property type="entry name" value="P-loop containing nucleotide triphosphate hydrolases"/>
    <property type="match status" value="1"/>
</dbReference>
<dbReference type="HAMAP" id="MF_01973">
    <property type="entry name" value="lon_bact"/>
    <property type="match status" value="1"/>
</dbReference>
<dbReference type="InterPro" id="IPR003593">
    <property type="entry name" value="AAA+_ATPase"/>
</dbReference>
<dbReference type="InterPro" id="IPR003959">
    <property type="entry name" value="ATPase_AAA_core"/>
</dbReference>
<dbReference type="InterPro" id="IPR027543">
    <property type="entry name" value="Lon_bac"/>
</dbReference>
<dbReference type="InterPro" id="IPR004815">
    <property type="entry name" value="Lon_bac/euk-typ"/>
</dbReference>
<dbReference type="InterPro" id="IPR054594">
    <property type="entry name" value="Lon_lid"/>
</dbReference>
<dbReference type="InterPro" id="IPR008269">
    <property type="entry name" value="Lon_proteolytic"/>
</dbReference>
<dbReference type="InterPro" id="IPR027065">
    <property type="entry name" value="Lon_Prtase"/>
</dbReference>
<dbReference type="InterPro" id="IPR003111">
    <property type="entry name" value="Lon_prtase_N"/>
</dbReference>
<dbReference type="InterPro" id="IPR046336">
    <property type="entry name" value="Lon_prtase_N_sf"/>
</dbReference>
<dbReference type="InterPro" id="IPR027417">
    <property type="entry name" value="P-loop_NTPase"/>
</dbReference>
<dbReference type="InterPro" id="IPR008268">
    <property type="entry name" value="Peptidase_S16_AS"/>
</dbReference>
<dbReference type="InterPro" id="IPR015947">
    <property type="entry name" value="PUA-like_sf"/>
</dbReference>
<dbReference type="InterPro" id="IPR020568">
    <property type="entry name" value="Ribosomal_Su5_D2-typ_SF"/>
</dbReference>
<dbReference type="InterPro" id="IPR014721">
    <property type="entry name" value="Ribsml_uS5_D2-typ_fold_subgr"/>
</dbReference>
<dbReference type="NCBIfam" id="TIGR00763">
    <property type="entry name" value="lon"/>
    <property type="match status" value="1"/>
</dbReference>
<dbReference type="NCBIfam" id="NF008053">
    <property type="entry name" value="PRK10787.1"/>
    <property type="match status" value="1"/>
</dbReference>
<dbReference type="PANTHER" id="PTHR10046">
    <property type="entry name" value="ATP DEPENDENT LON PROTEASE FAMILY MEMBER"/>
    <property type="match status" value="1"/>
</dbReference>
<dbReference type="Pfam" id="PF00004">
    <property type="entry name" value="AAA"/>
    <property type="match status" value="1"/>
</dbReference>
<dbReference type="Pfam" id="PF05362">
    <property type="entry name" value="Lon_C"/>
    <property type="match status" value="1"/>
</dbReference>
<dbReference type="Pfam" id="PF22667">
    <property type="entry name" value="Lon_lid"/>
    <property type="match status" value="1"/>
</dbReference>
<dbReference type="Pfam" id="PF02190">
    <property type="entry name" value="LON_substr_bdg"/>
    <property type="match status" value="1"/>
</dbReference>
<dbReference type="PIRSF" id="PIRSF001174">
    <property type="entry name" value="Lon_proteas"/>
    <property type="match status" value="1"/>
</dbReference>
<dbReference type="PRINTS" id="PR00830">
    <property type="entry name" value="ENDOLAPTASE"/>
</dbReference>
<dbReference type="SMART" id="SM00382">
    <property type="entry name" value="AAA"/>
    <property type="match status" value="1"/>
</dbReference>
<dbReference type="SMART" id="SM00464">
    <property type="entry name" value="LON"/>
    <property type="match status" value="1"/>
</dbReference>
<dbReference type="SUPFAM" id="SSF52540">
    <property type="entry name" value="P-loop containing nucleoside triphosphate hydrolases"/>
    <property type="match status" value="1"/>
</dbReference>
<dbReference type="SUPFAM" id="SSF88697">
    <property type="entry name" value="PUA domain-like"/>
    <property type="match status" value="1"/>
</dbReference>
<dbReference type="SUPFAM" id="SSF54211">
    <property type="entry name" value="Ribosomal protein S5 domain 2-like"/>
    <property type="match status" value="1"/>
</dbReference>
<dbReference type="PROSITE" id="PS51787">
    <property type="entry name" value="LON_N"/>
    <property type="match status" value="1"/>
</dbReference>
<dbReference type="PROSITE" id="PS51786">
    <property type="entry name" value="LON_PROTEOLYTIC"/>
    <property type="match status" value="1"/>
</dbReference>
<dbReference type="PROSITE" id="PS01046">
    <property type="entry name" value="LON_SER"/>
    <property type="match status" value="1"/>
</dbReference>
<organism>
    <name type="scientific">Geobacter metallireducens (strain ATCC 53774 / DSM 7210 / GS-15)</name>
    <dbReference type="NCBI Taxonomy" id="269799"/>
    <lineage>
        <taxon>Bacteria</taxon>
        <taxon>Pseudomonadati</taxon>
        <taxon>Thermodesulfobacteriota</taxon>
        <taxon>Desulfuromonadia</taxon>
        <taxon>Geobacterales</taxon>
        <taxon>Geobacteraceae</taxon>
        <taxon>Geobacter</taxon>
    </lineage>
</organism>
<protein>
    <recommendedName>
        <fullName evidence="1">Lon protease</fullName>
        <ecNumber evidence="1">3.4.21.53</ecNumber>
    </recommendedName>
    <alternativeName>
        <fullName evidence="1">ATP-dependent protease La</fullName>
    </alternativeName>
</protein>
<proteinExistence type="inferred from homology"/>